<reference key="1">
    <citation type="journal article" date="2009" name="PLoS Genet.">
        <title>Organised genome dynamics in the Escherichia coli species results in highly diverse adaptive paths.</title>
        <authorList>
            <person name="Touchon M."/>
            <person name="Hoede C."/>
            <person name="Tenaillon O."/>
            <person name="Barbe V."/>
            <person name="Baeriswyl S."/>
            <person name="Bidet P."/>
            <person name="Bingen E."/>
            <person name="Bonacorsi S."/>
            <person name="Bouchier C."/>
            <person name="Bouvet O."/>
            <person name="Calteau A."/>
            <person name="Chiapello H."/>
            <person name="Clermont O."/>
            <person name="Cruveiller S."/>
            <person name="Danchin A."/>
            <person name="Diard M."/>
            <person name="Dossat C."/>
            <person name="Karoui M.E."/>
            <person name="Frapy E."/>
            <person name="Garry L."/>
            <person name="Ghigo J.M."/>
            <person name="Gilles A.M."/>
            <person name="Johnson J."/>
            <person name="Le Bouguenec C."/>
            <person name="Lescat M."/>
            <person name="Mangenot S."/>
            <person name="Martinez-Jehanne V."/>
            <person name="Matic I."/>
            <person name="Nassif X."/>
            <person name="Oztas S."/>
            <person name="Petit M.A."/>
            <person name="Pichon C."/>
            <person name="Rouy Z."/>
            <person name="Ruf C.S."/>
            <person name="Schneider D."/>
            <person name="Tourret J."/>
            <person name="Vacherie B."/>
            <person name="Vallenet D."/>
            <person name="Medigue C."/>
            <person name="Rocha E.P.C."/>
            <person name="Denamur E."/>
        </authorList>
    </citation>
    <scope>NUCLEOTIDE SEQUENCE [LARGE SCALE GENOMIC DNA]</scope>
    <source>
        <strain>ATCC 35469 / DSM 13698 / BCRC 15582 / CCUG 18766 / IAM 14443 / JCM 21226 / LMG 7866 / NBRC 102419 / NCTC 12128 / CDC 0568-73</strain>
    </source>
</reference>
<accession>B7LU79</accession>
<protein>
    <recommendedName>
        <fullName evidence="1">Ketol-acid reductoisomerase (NADP(+))</fullName>
        <shortName evidence="1">KARI</shortName>
        <ecNumber evidence="1">1.1.1.86</ecNumber>
    </recommendedName>
    <alternativeName>
        <fullName evidence="1">Acetohydroxy-acid isomeroreductase</fullName>
        <shortName evidence="1">AHIR</shortName>
    </alternativeName>
    <alternativeName>
        <fullName evidence="1">Alpha-keto-beta-hydroxylacyl reductoisomerase</fullName>
    </alternativeName>
    <alternativeName>
        <fullName evidence="1">Ketol-acid reductoisomerase type 2</fullName>
    </alternativeName>
    <alternativeName>
        <fullName evidence="1">Ketol-acid reductoisomerase type II</fullName>
    </alternativeName>
</protein>
<gene>
    <name evidence="1" type="primary">ilvC</name>
    <name type="ordered locus">EFER_3728</name>
</gene>
<dbReference type="EC" id="1.1.1.86" evidence="1"/>
<dbReference type="EMBL" id="CU928158">
    <property type="protein sequence ID" value="CAQ91188.1"/>
    <property type="molecule type" value="Genomic_DNA"/>
</dbReference>
<dbReference type="RefSeq" id="WP_002431880.1">
    <property type="nucleotide sequence ID" value="NC_011740.1"/>
</dbReference>
<dbReference type="SMR" id="B7LU79"/>
<dbReference type="GeneID" id="75059665"/>
<dbReference type="KEGG" id="efe:EFER_3728"/>
<dbReference type="HOGENOM" id="CLU_551905_0_0_6"/>
<dbReference type="OrthoDB" id="9804088at2"/>
<dbReference type="UniPathway" id="UPA00047">
    <property type="reaction ID" value="UER00056"/>
</dbReference>
<dbReference type="UniPathway" id="UPA00049">
    <property type="reaction ID" value="UER00060"/>
</dbReference>
<dbReference type="Proteomes" id="UP000000745">
    <property type="component" value="Chromosome"/>
</dbReference>
<dbReference type="GO" id="GO:0005829">
    <property type="term" value="C:cytosol"/>
    <property type="evidence" value="ECO:0007669"/>
    <property type="project" value="TreeGrafter"/>
</dbReference>
<dbReference type="GO" id="GO:0004455">
    <property type="term" value="F:ketol-acid reductoisomerase activity"/>
    <property type="evidence" value="ECO:0007669"/>
    <property type="project" value="UniProtKB-UniRule"/>
</dbReference>
<dbReference type="GO" id="GO:0000287">
    <property type="term" value="F:magnesium ion binding"/>
    <property type="evidence" value="ECO:0007669"/>
    <property type="project" value="UniProtKB-UniRule"/>
</dbReference>
<dbReference type="GO" id="GO:0009097">
    <property type="term" value="P:isoleucine biosynthetic process"/>
    <property type="evidence" value="ECO:0007669"/>
    <property type="project" value="UniProtKB-UniRule"/>
</dbReference>
<dbReference type="GO" id="GO:0009099">
    <property type="term" value="P:L-valine biosynthetic process"/>
    <property type="evidence" value="ECO:0007669"/>
    <property type="project" value="UniProtKB-UniRule"/>
</dbReference>
<dbReference type="FunFam" id="1.10.1040.10:FF:000007">
    <property type="entry name" value="Ketol-acid reductoisomerase (NADP(+))"/>
    <property type="match status" value="1"/>
</dbReference>
<dbReference type="FunFam" id="3.40.50.720:FF:000043">
    <property type="entry name" value="Ketol-acid reductoisomerase (NADP(+))"/>
    <property type="match status" value="1"/>
</dbReference>
<dbReference type="Gene3D" id="1.10.1040.10">
    <property type="entry name" value="N-(1-d-carboxylethyl)-l-norvaline Dehydrogenase, domain 2"/>
    <property type="match status" value="1"/>
</dbReference>
<dbReference type="Gene3D" id="3.40.50.720">
    <property type="entry name" value="NAD(P)-binding Rossmann-like Domain"/>
    <property type="match status" value="1"/>
</dbReference>
<dbReference type="HAMAP" id="MF_00435">
    <property type="entry name" value="IlvC"/>
    <property type="match status" value="1"/>
</dbReference>
<dbReference type="InterPro" id="IPR008927">
    <property type="entry name" value="6-PGluconate_DH-like_C_sf"/>
</dbReference>
<dbReference type="InterPro" id="IPR013328">
    <property type="entry name" value="6PGD_dom2"/>
</dbReference>
<dbReference type="InterPro" id="IPR013023">
    <property type="entry name" value="KARI"/>
</dbReference>
<dbReference type="InterPro" id="IPR000506">
    <property type="entry name" value="KARI_C"/>
</dbReference>
<dbReference type="InterPro" id="IPR013116">
    <property type="entry name" value="KARI_N"/>
</dbReference>
<dbReference type="InterPro" id="IPR036291">
    <property type="entry name" value="NAD(P)-bd_dom_sf"/>
</dbReference>
<dbReference type="NCBIfam" id="TIGR00465">
    <property type="entry name" value="ilvC"/>
    <property type="match status" value="1"/>
</dbReference>
<dbReference type="NCBIfam" id="NF003557">
    <property type="entry name" value="PRK05225.1"/>
    <property type="match status" value="1"/>
</dbReference>
<dbReference type="PANTHER" id="PTHR21371">
    <property type="entry name" value="KETOL-ACID REDUCTOISOMERASE, MITOCHONDRIAL"/>
    <property type="match status" value="1"/>
</dbReference>
<dbReference type="PANTHER" id="PTHR21371:SF1">
    <property type="entry name" value="KETOL-ACID REDUCTOISOMERASE, MITOCHONDRIAL"/>
    <property type="match status" value="1"/>
</dbReference>
<dbReference type="Pfam" id="PF01450">
    <property type="entry name" value="KARI_C"/>
    <property type="match status" value="2"/>
</dbReference>
<dbReference type="Pfam" id="PF07991">
    <property type="entry name" value="KARI_N"/>
    <property type="match status" value="1"/>
</dbReference>
<dbReference type="SUPFAM" id="SSF48179">
    <property type="entry name" value="6-phosphogluconate dehydrogenase C-terminal domain-like"/>
    <property type="match status" value="2"/>
</dbReference>
<dbReference type="SUPFAM" id="SSF51735">
    <property type="entry name" value="NAD(P)-binding Rossmann-fold domains"/>
    <property type="match status" value="1"/>
</dbReference>
<dbReference type="PROSITE" id="PS51851">
    <property type="entry name" value="KARI_C"/>
    <property type="match status" value="2"/>
</dbReference>
<dbReference type="PROSITE" id="PS51850">
    <property type="entry name" value="KARI_N"/>
    <property type="match status" value="1"/>
</dbReference>
<organism>
    <name type="scientific">Escherichia fergusonii (strain ATCC 35469 / DSM 13698 / CCUG 18766 / IAM 14443 / JCM 21226 / LMG 7866 / NBRC 102419 / NCTC 12128 / CDC 0568-73)</name>
    <dbReference type="NCBI Taxonomy" id="585054"/>
    <lineage>
        <taxon>Bacteria</taxon>
        <taxon>Pseudomonadati</taxon>
        <taxon>Pseudomonadota</taxon>
        <taxon>Gammaproteobacteria</taxon>
        <taxon>Enterobacterales</taxon>
        <taxon>Enterobacteriaceae</taxon>
        <taxon>Escherichia</taxon>
    </lineage>
</organism>
<keyword id="KW-0028">Amino-acid biosynthesis</keyword>
<keyword id="KW-0100">Branched-chain amino acid biosynthesis</keyword>
<keyword id="KW-0460">Magnesium</keyword>
<keyword id="KW-0479">Metal-binding</keyword>
<keyword id="KW-0521">NADP</keyword>
<keyword id="KW-0560">Oxidoreductase</keyword>
<keyword id="KW-0677">Repeat</keyword>
<feature type="chain" id="PRO_1000190964" description="Ketol-acid reductoisomerase (NADP(+))">
    <location>
        <begin position="1"/>
        <end position="491"/>
    </location>
</feature>
<feature type="domain" description="KARI N-terminal Rossmann" evidence="2">
    <location>
        <begin position="15"/>
        <end position="208"/>
    </location>
</feature>
<feature type="domain" description="KARI C-terminal knotted 1" evidence="3">
    <location>
        <begin position="209"/>
        <end position="344"/>
    </location>
</feature>
<feature type="domain" description="KARI C-terminal knotted 2" evidence="3">
    <location>
        <begin position="345"/>
        <end position="484"/>
    </location>
</feature>
<feature type="active site" evidence="1">
    <location>
        <position position="132"/>
    </location>
</feature>
<feature type="binding site" evidence="1">
    <location>
        <begin position="45"/>
        <end position="48"/>
    </location>
    <ligand>
        <name>NADP(+)</name>
        <dbReference type="ChEBI" id="CHEBI:58349"/>
    </ligand>
</feature>
<feature type="binding site" evidence="1">
    <location>
        <position position="68"/>
    </location>
    <ligand>
        <name>NADP(+)</name>
        <dbReference type="ChEBI" id="CHEBI:58349"/>
    </ligand>
</feature>
<feature type="binding site" evidence="1">
    <location>
        <position position="76"/>
    </location>
    <ligand>
        <name>NADP(+)</name>
        <dbReference type="ChEBI" id="CHEBI:58349"/>
    </ligand>
</feature>
<feature type="binding site" evidence="1">
    <location>
        <position position="78"/>
    </location>
    <ligand>
        <name>NADP(+)</name>
        <dbReference type="ChEBI" id="CHEBI:58349"/>
    </ligand>
</feature>
<feature type="binding site" evidence="1">
    <location>
        <begin position="108"/>
        <end position="110"/>
    </location>
    <ligand>
        <name>NADP(+)</name>
        <dbReference type="ChEBI" id="CHEBI:58349"/>
    </ligand>
</feature>
<feature type="binding site" evidence="1">
    <location>
        <position position="158"/>
    </location>
    <ligand>
        <name>NADP(+)</name>
        <dbReference type="ChEBI" id="CHEBI:58349"/>
    </ligand>
</feature>
<feature type="binding site" evidence="1">
    <location>
        <position position="217"/>
    </location>
    <ligand>
        <name>Mg(2+)</name>
        <dbReference type="ChEBI" id="CHEBI:18420"/>
        <label>1</label>
    </ligand>
</feature>
<feature type="binding site" evidence="1">
    <location>
        <position position="217"/>
    </location>
    <ligand>
        <name>Mg(2+)</name>
        <dbReference type="ChEBI" id="CHEBI:18420"/>
        <label>2</label>
    </ligand>
</feature>
<feature type="binding site" evidence="1">
    <location>
        <position position="221"/>
    </location>
    <ligand>
        <name>Mg(2+)</name>
        <dbReference type="ChEBI" id="CHEBI:18420"/>
        <label>1</label>
    </ligand>
</feature>
<feature type="binding site" evidence="1">
    <location>
        <position position="389"/>
    </location>
    <ligand>
        <name>Mg(2+)</name>
        <dbReference type="ChEBI" id="CHEBI:18420"/>
        <label>2</label>
    </ligand>
</feature>
<feature type="binding site" evidence="1">
    <location>
        <position position="393"/>
    </location>
    <ligand>
        <name>Mg(2+)</name>
        <dbReference type="ChEBI" id="CHEBI:18420"/>
        <label>2</label>
    </ligand>
</feature>
<feature type="binding site" evidence="1">
    <location>
        <position position="414"/>
    </location>
    <ligand>
        <name>substrate</name>
    </ligand>
</feature>
<sequence>MANYFNTLNLRQQLAQLGKCRFMGRDEFADGASYLQGKKVVIVGCGAQGLNQGLNMRDSGLDISYALRKEAITEKRASWRKATENGFKVGTYEELIPQADLVVNLTPDKQHSDVVRTVQPLMKDGAALGYSHGFNIVEVGEQIRKDITVVMVAPKCPGTEVREEYKRGFGVPTLIAVHPENDPKGEGMAIAKAWAAATGGHRAGVLESSFVAEVKSDLMGEQTILCGMLQAGSLLCFDKLVEEGTDPAYAEKLIQFGWETITEALKQGGITLMMDRLSNPAKLRAYALSEQLKEIMAPLFQKHMDDIISGEFSSGMMADWANDDKKLLTWREETGKTAFETAPQYEGKIGEQEYFDKGVLMIAMVKAGVELAFETMVDSGIIEESAYYESLHELPLIANTIARKRLYEMNVVISDTAEYGNYLFSYACVPLLKPFMAELQPGDLGKAIPEGAVDNAQLRDVNEAIRSHAIEQVGKKLRGYMTDMKRIAVAG</sequence>
<comment type="function">
    <text evidence="1">Involved in the biosynthesis of branched-chain amino acids (BCAA). Catalyzes an alkyl-migration followed by a ketol-acid reduction of (S)-2-acetolactate (S2AL) to yield (R)-2,3-dihydroxy-isovalerate. In the isomerase reaction, S2AL is rearranged via a Mg-dependent methyl migration to produce 3-hydroxy-3-methyl-2-ketobutyrate (HMKB). In the reductase reaction, this 2-ketoacid undergoes a metal-dependent reduction by NADPH to yield (R)-2,3-dihydroxy-isovalerate.</text>
</comment>
<comment type="catalytic activity">
    <reaction evidence="1">
        <text>(2R)-2,3-dihydroxy-3-methylbutanoate + NADP(+) = (2S)-2-acetolactate + NADPH + H(+)</text>
        <dbReference type="Rhea" id="RHEA:22068"/>
        <dbReference type="ChEBI" id="CHEBI:15378"/>
        <dbReference type="ChEBI" id="CHEBI:49072"/>
        <dbReference type="ChEBI" id="CHEBI:57783"/>
        <dbReference type="ChEBI" id="CHEBI:58349"/>
        <dbReference type="ChEBI" id="CHEBI:58476"/>
        <dbReference type="EC" id="1.1.1.86"/>
    </reaction>
</comment>
<comment type="catalytic activity">
    <reaction evidence="1">
        <text>(2R,3R)-2,3-dihydroxy-3-methylpentanoate + NADP(+) = (S)-2-ethyl-2-hydroxy-3-oxobutanoate + NADPH + H(+)</text>
        <dbReference type="Rhea" id="RHEA:13493"/>
        <dbReference type="ChEBI" id="CHEBI:15378"/>
        <dbReference type="ChEBI" id="CHEBI:49256"/>
        <dbReference type="ChEBI" id="CHEBI:49258"/>
        <dbReference type="ChEBI" id="CHEBI:57783"/>
        <dbReference type="ChEBI" id="CHEBI:58349"/>
        <dbReference type="EC" id="1.1.1.86"/>
    </reaction>
</comment>
<comment type="cofactor">
    <cofactor evidence="1">
        <name>Mg(2+)</name>
        <dbReference type="ChEBI" id="CHEBI:18420"/>
    </cofactor>
    <text evidence="1">Binds 2 magnesium ions per subunit.</text>
</comment>
<comment type="pathway">
    <text evidence="1">Amino-acid biosynthesis; L-isoleucine biosynthesis; L-isoleucine from 2-oxobutanoate: step 2/4.</text>
</comment>
<comment type="pathway">
    <text evidence="1">Amino-acid biosynthesis; L-valine biosynthesis; L-valine from pyruvate: step 2/4.</text>
</comment>
<comment type="similarity">
    <text evidence="1">Belongs to the ketol-acid reductoisomerase family.</text>
</comment>
<name>ILVC_ESCF3</name>
<proteinExistence type="inferred from homology"/>
<evidence type="ECO:0000255" key="1">
    <source>
        <dbReference type="HAMAP-Rule" id="MF_00435"/>
    </source>
</evidence>
<evidence type="ECO:0000255" key="2">
    <source>
        <dbReference type="PROSITE-ProRule" id="PRU01197"/>
    </source>
</evidence>
<evidence type="ECO:0000255" key="3">
    <source>
        <dbReference type="PROSITE-ProRule" id="PRU01198"/>
    </source>
</evidence>